<dbReference type="EC" id="4.3.2.10" evidence="1"/>
<dbReference type="EMBL" id="CP000830">
    <property type="protein sequence ID" value="ABV94309.1"/>
    <property type="molecule type" value="Genomic_DNA"/>
</dbReference>
<dbReference type="RefSeq" id="WP_012179237.1">
    <property type="nucleotide sequence ID" value="NC_009952.1"/>
</dbReference>
<dbReference type="SMR" id="A8LHX5"/>
<dbReference type="STRING" id="398580.Dshi_2576"/>
<dbReference type="KEGG" id="dsh:Dshi_2576"/>
<dbReference type="eggNOG" id="COG0107">
    <property type="taxonomic scope" value="Bacteria"/>
</dbReference>
<dbReference type="HOGENOM" id="CLU_048577_4_0_5"/>
<dbReference type="OrthoDB" id="9781903at2"/>
<dbReference type="UniPathway" id="UPA00031">
    <property type="reaction ID" value="UER00010"/>
</dbReference>
<dbReference type="Proteomes" id="UP000006833">
    <property type="component" value="Chromosome"/>
</dbReference>
<dbReference type="GO" id="GO:0005737">
    <property type="term" value="C:cytoplasm"/>
    <property type="evidence" value="ECO:0007669"/>
    <property type="project" value="UniProtKB-SubCell"/>
</dbReference>
<dbReference type="GO" id="GO:0000107">
    <property type="term" value="F:imidazoleglycerol-phosphate synthase activity"/>
    <property type="evidence" value="ECO:0007669"/>
    <property type="project" value="UniProtKB-UniRule"/>
</dbReference>
<dbReference type="GO" id="GO:0016829">
    <property type="term" value="F:lyase activity"/>
    <property type="evidence" value="ECO:0007669"/>
    <property type="project" value="UniProtKB-KW"/>
</dbReference>
<dbReference type="GO" id="GO:0000105">
    <property type="term" value="P:L-histidine biosynthetic process"/>
    <property type="evidence" value="ECO:0007669"/>
    <property type="project" value="UniProtKB-UniRule"/>
</dbReference>
<dbReference type="CDD" id="cd04731">
    <property type="entry name" value="HisF"/>
    <property type="match status" value="1"/>
</dbReference>
<dbReference type="FunFam" id="3.20.20.70:FF:000006">
    <property type="entry name" value="Imidazole glycerol phosphate synthase subunit HisF"/>
    <property type="match status" value="1"/>
</dbReference>
<dbReference type="Gene3D" id="3.20.20.70">
    <property type="entry name" value="Aldolase class I"/>
    <property type="match status" value="1"/>
</dbReference>
<dbReference type="HAMAP" id="MF_01013">
    <property type="entry name" value="HisF"/>
    <property type="match status" value="1"/>
</dbReference>
<dbReference type="InterPro" id="IPR013785">
    <property type="entry name" value="Aldolase_TIM"/>
</dbReference>
<dbReference type="InterPro" id="IPR006062">
    <property type="entry name" value="His_biosynth"/>
</dbReference>
<dbReference type="InterPro" id="IPR004651">
    <property type="entry name" value="HisF"/>
</dbReference>
<dbReference type="InterPro" id="IPR050064">
    <property type="entry name" value="IGPS_HisA/HisF"/>
</dbReference>
<dbReference type="InterPro" id="IPR011060">
    <property type="entry name" value="RibuloseP-bd_barrel"/>
</dbReference>
<dbReference type="NCBIfam" id="TIGR00735">
    <property type="entry name" value="hisF"/>
    <property type="match status" value="1"/>
</dbReference>
<dbReference type="PANTHER" id="PTHR21235:SF2">
    <property type="entry name" value="IMIDAZOLE GLYCEROL PHOSPHATE SYNTHASE HISHF"/>
    <property type="match status" value="1"/>
</dbReference>
<dbReference type="PANTHER" id="PTHR21235">
    <property type="entry name" value="IMIDAZOLE GLYCEROL PHOSPHATE SYNTHASE SUBUNIT HISF/H IGP SYNTHASE SUBUNIT HISF/H"/>
    <property type="match status" value="1"/>
</dbReference>
<dbReference type="Pfam" id="PF00977">
    <property type="entry name" value="His_biosynth"/>
    <property type="match status" value="1"/>
</dbReference>
<dbReference type="SUPFAM" id="SSF51366">
    <property type="entry name" value="Ribulose-phoshate binding barrel"/>
    <property type="match status" value="1"/>
</dbReference>
<accession>A8LHX5</accession>
<feature type="chain" id="PRO_1000084057" description="Imidazole glycerol phosphate synthase subunit HisF">
    <location>
        <begin position="1"/>
        <end position="253"/>
    </location>
</feature>
<feature type="active site" evidence="1">
    <location>
        <position position="11"/>
    </location>
</feature>
<feature type="active site" evidence="1">
    <location>
        <position position="130"/>
    </location>
</feature>
<evidence type="ECO:0000255" key="1">
    <source>
        <dbReference type="HAMAP-Rule" id="MF_01013"/>
    </source>
</evidence>
<protein>
    <recommendedName>
        <fullName evidence="1">Imidazole glycerol phosphate synthase subunit HisF</fullName>
        <ecNumber evidence="1">4.3.2.10</ecNumber>
    </recommendedName>
    <alternativeName>
        <fullName evidence="1">IGP synthase cyclase subunit</fullName>
    </alternativeName>
    <alternativeName>
        <fullName evidence="1">IGP synthase subunit HisF</fullName>
    </alternativeName>
    <alternativeName>
        <fullName evidence="1">ImGP synthase subunit HisF</fullName>
        <shortName evidence="1">IGPS subunit HisF</shortName>
    </alternativeName>
</protein>
<comment type="function">
    <text evidence="1">IGPS catalyzes the conversion of PRFAR and glutamine to IGP, AICAR and glutamate. The HisF subunit catalyzes the cyclization activity that produces IGP and AICAR from PRFAR using the ammonia provided by the HisH subunit.</text>
</comment>
<comment type="catalytic activity">
    <reaction evidence="1">
        <text>5-[(5-phospho-1-deoxy-D-ribulos-1-ylimino)methylamino]-1-(5-phospho-beta-D-ribosyl)imidazole-4-carboxamide + L-glutamine = D-erythro-1-(imidazol-4-yl)glycerol 3-phosphate + 5-amino-1-(5-phospho-beta-D-ribosyl)imidazole-4-carboxamide + L-glutamate + H(+)</text>
        <dbReference type="Rhea" id="RHEA:24793"/>
        <dbReference type="ChEBI" id="CHEBI:15378"/>
        <dbReference type="ChEBI" id="CHEBI:29985"/>
        <dbReference type="ChEBI" id="CHEBI:58278"/>
        <dbReference type="ChEBI" id="CHEBI:58359"/>
        <dbReference type="ChEBI" id="CHEBI:58475"/>
        <dbReference type="ChEBI" id="CHEBI:58525"/>
        <dbReference type="EC" id="4.3.2.10"/>
    </reaction>
</comment>
<comment type="pathway">
    <text evidence="1">Amino-acid biosynthesis; L-histidine biosynthesis; L-histidine from 5-phospho-alpha-D-ribose 1-diphosphate: step 5/9.</text>
</comment>
<comment type="subunit">
    <text evidence="1">Heterodimer of HisH and HisF.</text>
</comment>
<comment type="subcellular location">
    <subcellularLocation>
        <location evidence="1">Cytoplasm</location>
    </subcellularLocation>
</comment>
<comment type="similarity">
    <text evidence="1">Belongs to the HisA/HisF family.</text>
</comment>
<sequence length="253" mass="26491">MLKIRVIPCLDVADGRVVKGVNFVDLVDAGDPVESAKAYDAAGADELCFLDIHATNENRGTMYDLATRTAEQCFMPLTIGGGVRTTEDVRNLLLAGADKVSFNSAAVADPDVIARAADKFGSQCIVCAIDAKTVAPGRWEIFTHGGRKPTGIDAVEFAKTVVEKGAGEILLTSMDRDGTKQGFNIALTRAISDAVSVPVIASGGVGTLDHLVEGVTEGGASAVLAASIFHFGEFTIREAKEHMAEAGIPVRLS</sequence>
<organism>
    <name type="scientific">Dinoroseobacter shibae (strain DSM 16493 / NCIMB 14021 / DFL 12)</name>
    <dbReference type="NCBI Taxonomy" id="398580"/>
    <lineage>
        <taxon>Bacteria</taxon>
        <taxon>Pseudomonadati</taxon>
        <taxon>Pseudomonadota</taxon>
        <taxon>Alphaproteobacteria</taxon>
        <taxon>Rhodobacterales</taxon>
        <taxon>Roseobacteraceae</taxon>
        <taxon>Dinoroseobacter</taxon>
    </lineage>
</organism>
<gene>
    <name evidence="1" type="primary">hisF</name>
    <name type="ordered locus">Dshi_2576</name>
</gene>
<reference key="1">
    <citation type="journal article" date="2010" name="ISME J.">
        <title>The complete genome sequence of the algal symbiont Dinoroseobacter shibae: a hitchhiker's guide to life in the sea.</title>
        <authorList>
            <person name="Wagner-Dobler I."/>
            <person name="Ballhausen B."/>
            <person name="Berger M."/>
            <person name="Brinkhoff T."/>
            <person name="Buchholz I."/>
            <person name="Bunk B."/>
            <person name="Cypionka H."/>
            <person name="Daniel R."/>
            <person name="Drepper T."/>
            <person name="Gerdts G."/>
            <person name="Hahnke S."/>
            <person name="Han C."/>
            <person name="Jahn D."/>
            <person name="Kalhoefer D."/>
            <person name="Kiss H."/>
            <person name="Klenk H.P."/>
            <person name="Kyrpides N."/>
            <person name="Liebl W."/>
            <person name="Liesegang H."/>
            <person name="Meincke L."/>
            <person name="Pati A."/>
            <person name="Petersen J."/>
            <person name="Piekarski T."/>
            <person name="Pommerenke C."/>
            <person name="Pradella S."/>
            <person name="Pukall R."/>
            <person name="Rabus R."/>
            <person name="Stackebrandt E."/>
            <person name="Thole S."/>
            <person name="Thompson L."/>
            <person name="Tielen P."/>
            <person name="Tomasch J."/>
            <person name="von Jan M."/>
            <person name="Wanphrut N."/>
            <person name="Wichels A."/>
            <person name="Zech H."/>
            <person name="Simon M."/>
        </authorList>
    </citation>
    <scope>NUCLEOTIDE SEQUENCE [LARGE SCALE GENOMIC DNA]</scope>
    <source>
        <strain>DSM 16493 / NCIMB 14021 / DFL 12</strain>
    </source>
</reference>
<keyword id="KW-0028">Amino-acid biosynthesis</keyword>
<keyword id="KW-0963">Cytoplasm</keyword>
<keyword id="KW-0368">Histidine biosynthesis</keyword>
<keyword id="KW-0456">Lyase</keyword>
<keyword id="KW-1185">Reference proteome</keyword>
<name>HIS6_DINSH</name>
<proteinExistence type="inferred from homology"/>